<sequence length="80" mass="9377">MKKPLRQQNRQIISYVPRTEPAPPEHAIKMDSFRDVWMLRGKYVAFVLMGESFLRSPAFTVPESAQRWANQIRQEGEVTE</sequence>
<proteinExistence type="inferred from homology"/>
<reference key="1">
    <citation type="journal article" date="2011" name="Proc. Natl. Acad. Sci. U.S.A.">
        <title>Genomic anatomy of Escherichia coli O157:H7 outbreaks.</title>
        <authorList>
            <person name="Eppinger M."/>
            <person name="Mammel M.K."/>
            <person name="Leclerc J.E."/>
            <person name="Ravel J."/>
            <person name="Cebula T.A."/>
        </authorList>
    </citation>
    <scope>NUCLEOTIDE SEQUENCE [LARGE SCALE GENOMIC DNA]</scope>
    <source>
        <strain>EC4115 / EHEC</strain>
    </source>
</reference>
<comment type="function">
    <text evidence="1">Activates the cell division inhibited by chromosomal DNA over-replication.</text>
</comment>
<comment type="similarity">
    <text evidence="1">Belongs to the CedA family.</text>
</comment>
<accession>B5YQ18</accession>
<dbReference type="EMBL" id="CP001164">
    <property type="protein sequence ID" value="ACI36794.1"/>
    <property type="molecule type" value="Genomic_DNA"/>
</dbReference>
<dbReference type="BMRB" id="B5YQ18"/>
<dbReference type="SMR" id="B5YQ18"/>
<dbReference type="KEGG" id="ecf:ECH74115_2449"/>
<dbReference type="HOGENOM" id="CLU_167445_0_0_6"/>
<dbReference type="GO" id="GO:0003677">
    <property type="term" value="F:DNA binding"/>
    <property type="evidence" value="ECO:0007669"/>
    <property type="project" value="UniProtKB-UniRule"/>
</dbReference>
<dbReference type="GO" id="GO:0051301">
    <property type="term" value="P:cell division"/>
    <property type="evidence" value="ECO:0007669"/>
    <property type="project" value="UniProtKB-UniRule"/>
</dbReference>
<dbReference type="FunFam" id="3.30.730.20:FF:000001">
    <property type="entry name" value="Cell division activator CedA"/>
    <property type="match status" value="1"/>
</dbReference>
<dbReference type="Gene3D" id="3.30.730.20">
    <property type="entry name" value="Cell division activator CedA"/>
    <property type="match status" value="1"/>
</dbReference>
<dbReference type="HAMAP" id="MF_01580">
    <property type="entry name" value="CedA"/>
    <property type="match status" value="1"/>
</dbReference>
<dbReference type="InterPro" id="IPR038463">
    <property type="entry name" value="CedA-like_sf"/>
</dbReference>
<dbReference type="InterPro" id="IPR019666">
    <property type="entry name" value="Cell_div_activator_CedA"/>
</dbReference>
<dbReference type="NCBIfam" id="NF007510">
    <property type="entry name" value="PRK10113.1"/>
    <property type="match status" value="1"/>
</dbReference>
<dbReference type="Pfam" id="PF10729">
    <property type="entry name" value="CedA"/>
    <property type="match status" value="1"/>
</dbReference>
<protein>
    <recommendedName>
        <fullName evidence="1">Cell division activator CedA</fullName>
    </recommendedName>
</protein>
<keyword id="KW-0131">Cell cycle</keyword>
<keyword id="KW-0132">Cell division</keyword>
<keyword id="KW-0238">DNA-binding</keyword>
<organism>
    <name type="scientific">Escherichia coli O157:H7 (strain EC4115 / EHEC)</name>
    <dbReference type="NCBI Taxonomy" id="444450"/>
    <lineage>
        <taxon>Bacteria</taxon>
        <taxon>Pseudomonadati</taxon>
        <taxon>Pseudomonadota</taxon>
        <taxon>Gammaproteobacteria</taxon>
        <taxon>Enterobacterales</taxon>
        <taxon>Enterobacteriaceae</taxon>
        <taxon>Escherichia</taxon>
    </lineage>
</organism>
<gene>
    <name evidence="1" type="primary">cedA</name>
    <name type="ordered locus">ECH74115_2449</name>
</gene>
<name>CEDA_ECO5E</name>
<evidence type="ECO:0000255" key="1">
    <source>
        <dbReference type="HAMAP-Rule" id="MF_01580"/>
    </source>
</evidence>
<feature type="chain" id="PRO_1000200989" description="Cell division activator CedA">
    <location>
        <begin position="1"/>
        <end position="80"/>
    </location>
</feature>